<dbReference type="EC" id="4.2.3.4" evidence="1"/>
<dbReference type="EMBL" id="CP000050">
    <property type="protein sequence ID" value="AAY48337.1"/>
    <property type="status" value="ALT_INIT"/>
    <property type="molecule type" value="Genomic_DNA"/>
</dbReference>
<dbReference type="RefSeq" id="WP_011037967.1">
    <property type="nucleotide sequence ID" value="NZ_CP155948.1"/>
</dbReference>
<dbReference type="SMR" id="Q4UX86"/>
<dbReference type="KEGG" id="xcb:XC_1268"/>
<dbReference type="HOGENOM" id="CLU_001201_0_2_6"/>
<dbReference type="UniPathway" id="UPA00053">
    <property type="reaction ID" value="UER00085"/>
</dbReference>
<dbReference type="Proteomes" id="UP000000420">
    <property type="component" value="Chromosome"/>
</dbReference>
<dbReference type="GO" id="GO:0005737">
    <property type="term" value="C:cytoplasm"/>
    <property type="evidence" value="ECO:0007669"/>
    <property type="project" value="UniProtKB-SubCell"/>
</dbReference>
<dbReference type="GO" id="GO:0003856">
    <property type="term" value="F:3-dehydroquinate synthase activity"/>
    <property type="evidence" value="ECO:0007669"/>
    <property type="project" value="UniProtKB-UniRule"/>
</dbReference>
<dbReference type="GO" id="GO:0046872">
    <property type="term" value="F:metal ion binding"/>
    <property type="evidence" value="ECO:0007669"/>
    <property type="project" value="UniProtKB-KW"/>
</dbReference>
<dbReference type="GO" id="GO:0000166">
    <property type="term" value="F:nucleotide binding"/>
    <property type="evidence" value="ECO:0007669"/>
    <property type="project" value="UniProtKB-KW"/>
</dbReference>
<dbReference type="GO" id="GO:0008652">
    <property type="term" value="P:amino acid biosynthetic process"/>
    <property type="evidence" value="ECO:0007669"/>
    <property type="project" value="UniProtKB-KW"/>
</dbReference>
<dbReference type="GO" id="GO:0009073">
    <property type="term" value="P:aromatic amino acid family biosynthetic process"/>
    <property type="evidence" value="ECO:0007669"/>
    <property type="project" value="UniProtKB-KW"/>
</dbReference>
<dbReference type="GO" id="GO:0009423">
    <property type="term" value="P:chorismate biosynthetic process"/>
    <property type="evidence" value="ECO:0007669"/>
    <property type="project" value="UniProtKB-UniRule"/>
</dbReference>
<dbReference type="CDD" id="cd08195">
    <property type="entry name" value="DHQS"/>
    <property type="match status" value="1"/>
</dbReference>
<dbReference type="FunFam" id="3.40.50.1970:FF:000007">
    <property type="entry name" value="Pentafunctional AROM polypeptide"/>
    <property type="match status" value="1"/>
</dbReference>
<dbReference type="Gene3D" id="3.40.50.1970">
    <property type="match status" value="1"/>
</dbReference>
<dbReference type="Gene3D" id="1.20.1090.10">
    <property type="entry name" value="Dehydroquinate synthase-like - alpha domain"/>
    <property type="match status" value="1"/>
</dbReference>
<dbReference type="HAMAP" id="MF_00110">
    <property type="entry name" value="DHQ_synthase"/>
    <property type="match status" value="1"/>
</dbReference>
<dbReference type="InterPro" id="IPR050071">
    <property type="entry name" value="Dehydroquinate_synthase"/>
</dbReference>
<dbReference type="InterPro" id="IPR016037">
    <property type="entry name" value="DHQ_synth_AroB"/>
</dbReference>
<dbReference type="InterPro" id="IPR030963">
    <property type="entry name" value="DHQ_synth_fam"/>
</dbReference>
<dbReference type="InterPro" id="IPR030960">
    <property type="entry name" value="DHQS/DOIS_N"/>
</dbReference>
<dbReference type="InterPro" id="IPR056179">
    <property type="entry name" value="DHQS_C"/>
</dbReference>
<dbReference type="NCBIfam" id="TIGR01357">
    <property type="entry name" value="aroB"/>
    <property type="match status" value="1"/>
</dbReference>
<dbReference type="PANTHER" id="PTHR43622">
    <property type="entry name" value="3-DEHYDROQUINATE SYNTHASE"/>
    <property type="match status" value="1"/>
</dbReference>
<dbReference type="PANTHER" id="PTHR43622:SF7">
    <property type="entry name" value="3-DEHYDROQUINATE SYNTHASE, CHLOROPLASTIC"/>
    <property type="match status" value="1"/>
</dbReference>
<dbReference type="Pfam" id="PF01761">
    <property type="entry name" value="DHQ_synthase"/>
    <property type="match status" value="1"/>
</dbReference>
<dbReference type="Pfam" id="PF24621">
    <property type="entry name" value="DHQS_C"/>
    <property type="match status" value="1"/>
</dbReference>
<dbReference type="PIRSF" id="PIRSF001455">
    <property type="entry name" value="DHQ_synth"/>
    <property type="match status" value="1"/>
</dbReference>
<dbReference type="SUPFAM" id="SSF56796">
    <property type="entry name" value="Dehydroquinate synthase-like"/>
    <property type="match status" value="1"/>
</dbReference>
<organism>
    <name type="scientific">Xanthomonas campestris pv. campestris (strain 8004)</name>
    <dbReference type="NCBI Taxonomy" id="314565"/>
    <lineage>
        <taxon>Bacteria</taxon>
        <taxon>Pseudomonadati</taxon>
        <taxon>Pseudomonadota</taxon>
        <taxon>Gammaproteobacteria</taxon>
        <taxon>Lysobacterales</taxon>
        <taxon>Lysobacteraceae</taxon>
        <taxon>Xanthomonas</taxon>
    </lineage>
</organism>
<reference key="1">
    <citation type="journal article" date="2005" name="Genome Res.">
        <title>Comparative and functional genomic analyses of the pathogenicity of phytopathogen Xanthomonas campestris pv. campestris.</title>
        <authorList>
            <person name="Qian W."/>
            <person name="Jia Y."/>
            <person name="Ren S.-X."/>
            <person name="He Y.-Q."/>
            <person name="Feng J.-X."/>
            <person name="Lu L.-F."/>
            <person name="Sun Q."/>
            <person name="Ying G."/>
            <person name="Tang D.-J."/>
            <person name="Tang H."/>
            <person name="Wu W."/>
            <person name="Hao P."/>
            <person name="Wang L."/>
            <person name="Jiang B.-L."/>
            <person name="Zeng S."/>
            <person name="Gu W.-Y."/>
            <person name="Lu G."/>
            <person name="Rong L."/>
            <person name="Tian Y."/>
            <person name="Yao Z."/>
            <person name="Fu G."/>
            <person name="Chen B."/>
            <person name="Fang R."/>
            <person name="Qiang B."/>
            <person name="Chen Z."/>
            <person name="Zhao G.-P."/>
            <person name="Tang J.-L."/>
            <person name="He C."/>
        </authorList>
    </citation>
    <scope>NUCLEOTIDE SEQUENCE [LARGE SCALE GENOMIC DNA]</scope>
    <source>
        <strain>8004</strain>
    </source>
</reference>
<keyword id="KW-0028">Amino-acid biosynthesis</keyword>
<keyword id="KW-0057">Aromatic amino acid biosynthesis</keyword>
<keyword id="KW-0170">Cobalt</keyword>
<keyword id="KW-0963">Cytoplasm</keyword>
<keyword id="KW-0456">Lyase</keyword>
<keyword id="KW-0479">Metal-binding</keyword>
<keyword id="KW-0520">NAD</keyword>
<keyword id="KW-0547">Nucleotide-binding</keyword>
<keyword id="KW-0862">Zinc</keyword>
<gene>
    <name evidence="1" type="primary">aroB</name>
    <name type="ordered locus">XC_1268</name>
</gene>
<evidence type="ECO:0000255" key="1">
    <source>
        <dbReference type="HAMAP-Rule" id="MF_00110"/>
    </source>
</evidence>
<evidence type="ECO:0000305" key="2"/>
<protein>
    <recommendedName>
        <fullName evidence="1">3-dehydroquinate synthase</fullName>
        <shortName evidence="1">DHQS</shortName>
        <ecNumber evidence="1">4.2.3.4</ecNumber>
    </recommendedName>
</protein>
<name>AROB_XANC8</name>
<accession>Q4UX86</accession>
<feature type="chain" id="PRO_0000231143" description="3-dehydroquinate synthase">
    <location>
        <begin position="1"/>
        <end position="370"/>
    </location>
</feature>
<feature type="binding site" evidence="1">
    <location>
        <begin position="112"/>
        <end position="116"/>
    </location>
    <ligand>
        <name>NAD(+)</name>
        <dbReference type="ChEBI" id="CHEBI:57540"/>
    </ligand>
</feature>
<feature type="binding site" evidence="1">
    <location>
        <begin position="136"/>
        <end position="137"/>
    </location>
    <ligand>
        <name>NAD(+)</name>
        <dbReference type="ChEBI" id="CHEBI:57540"/>
    </ligand>
</feature>
<feature type="binding site" evidence="1">
    <location>
        <position position="149"/>
    </location>
    <ligand>
        <name>NAD(+)</name>
        <dbReference type="ChEBI" id="CHEBI:57540"/>
    </ligand>
</feature>
<feature type="binding site" evidence="1">
    <location>
        <position position="158"/>
    </location>
    <ligand>
        <name>NAD(+)</name>
        <dbReference type="ChEBI" id="CHEBI:57540"/>
    </ligand>
</feature>
<feature type="binding site" evidence="1">
    <location>
        <begin position="176"/>
        <end position="179"/>
    </location>
    <ligand>
        <name>NAD(+)</name>
        <dbReference type="ChEBI" id="CHEBI:57540"/>
    </ligand>
</feature>
<feature type="binding site" evidence="1">
    <location>
        <position position="191"/>
    </location>
    <ligand>
        <name>Zn(2+)</name>
        <dbReference type="ChEBI" id="CHEBI:29105"/>
    </ligand>
</feature>
<feature type="binding site" evidence="1">
    <location>
        <position position="254"/>
    </location>
    <ligand>
        <name>Zn(2+)</name>
        <dbReference type="ChEBI" id="CHEBI:29105"/>
    </ligand>
</feature>
<feature type="binding site" evidence="1">
    <location>
        <position position="276"/>
    </location>
    <ligand>
        <name>Zn(2+)</name>
        <dbReference type="ChEBI" id="CHEBI:29105"/>
    </ligand>
</feature>
<proteinExistence type="inferred from homology"/>
<sequence length="370" mass="38830">MTLPPSLRSVEVDGAQPYTISIAPGLLADGARLARHVRGRHVLLLSDTQVAPHYAAGVRAALLQARPDLQLGELVIAAGEASKTLDNFSLAITALAELGATRDACVFALGGGVVGDLAGFAAACWMRGVDCVQLPTSLLAMVDSSVGGKTAVDIPQGKNLVGAFHPPRAVIADTDTLRTLPTRELRAGLAEVIKYGAIGDPLFFQWLHAERRALLDGDPAALAQAIARSCEHKADIVARDPLEKGERALLNLGHTFGHAIETEQGYGAPGNDNLNHGEAVAVGMVLAARLSAALGMADAQDTEALRTLLHEFGLPTQIPTGLAPEALLGRMRLDKKNIAGRLRLVLWRGIGKAEVVPDVDEAAVLEILAD</sequence>
<comment type="function">
    <text evidence="1">Catalyzes the conversion of 3-deoxy-D-arabino-heptulosonate 7-phosphate (DAHP) to dehydroquinate (DHQ).</text>
</comment>
<comment type="catalytic activity">
    <reaction evidence="1">
        <text>7-phospho-2-dehydro-3-deoxy-D-arabino-heptonate = 3-dehydroquinate + phosphate</text>
        <dbReference type="Rhea" id="RHEA:21968"/>
        <dbReference type="ChEBI" id="CHEBI:32364"/>
        <dbReference type="ChEBI" id="CHEBI:43474"/>
        <dbReference type="ChEBI" id="CHEBI:58394"/>
        <dbReference type="EC" id="4.2.3.4"/>
    </reaction>
</comment>
<comment type="cofactor">
    <cofactor evidence="1">
        <name>Co(2+)</name>
        <dbReference type="ChEBI" id="CHEBI:48828"/>
    </cofactor>
    <cofactor evidence="1">
        <name>Zn(2+)</name>
        <dbReference type="ChEBI" id="CHEBI:29105"/>
    </cofactor>
    <text evidence="1">Binds 1 divalent metal cation per subunit. Can use either Co(2+) or Zn(2+).</text>
</comment>
<comment type="cofactor">
    <cofactor evidence="1">
        <name>NAD(+)</name>
        <dbReference type="ChEBI" id="CHEBI:57540"/>
    </cofactor>
</comment>
<comment type="pathway">
    <text evidence="1">Metabolic intermediate biosynthesis; chorismate biosynthesis; chorismate from D-erythrose 4-phosphate and phosphoenolpyruvate: step 2/7.</text>
</comment>
<comment type="subcellular location">
    <subcellularLocation>
        <location evidence="1">Cytoplasm</location>
    </subcellularLocation>
</comment>
<comment type="similarity">
    <text evidence="1">Belongs to the sugar phosphate cyclases superfamily. Dehydroquinate synthase family.</text>
</comment>
<comment type="sequence caution" evidence="2">
    <conflict type="erroneous initiation">
        <sequence resource="EMBL-CDS" id="AAY48337"/>
    </conflict>
</comment>